<dbReference type="EMBL" id="EF380354">
    <property type="protein sequence ID" value="ABQ52512.1"/>
    <property type="molecule type" value="Genomic_DNA"/>
</dbReference>
<dbReference type="RefSeq" id="YP_001294263.1">
    <property type="nucleotide sequence ID" value="NC_009600.1"/>
</dbReference>
<dbReference type="SMR" id="A6MMT7"/>
<dbReference type="GeneID" id="5236758"/>
<dbReference type="GO" id="GO:0009535">
    <property type="term" value="C:chloroplast thylakoid membrane"/>
    <property type="evidence" value="ECO:0007669"/>
    <property type="project" value="UniProtKB-SubCell"/>
</dbReference>
<dbReference type="GO" id="GO:0009512">
    <property type="term" value="C:cytochrome b6f complex"/>
    <property type="evidence" value="ECO:0007669"/>
    <property type="project" value="InterPro"/>
</dbReference>
<dbReference type="GO" id="GO:0045158">
    <property type="term" value="F:electron transporter, transferring electrons within cytochrome b6/f complex of photosystem II activity"/>
    <property type="evidence" value="ECO:0007669"/>
    <property type="project" value="InterPro"/>
</dbReference>
<dbReference type="GO" id="GO:0017004">
    <property type="term" value="P:cytochrome complex assembly"/>
    <property type="evidence" value="ECO:0007669"/>
    <property type="project" value="UniProtKB-UniRule"/>
</dbReference>
<dbReference type="GO" id="GO:0015979">
    <property type="term" value="P:photosynthesis"/>
    <property type="evidence" value="ECO:0007669"/>
    <property type="project" value="UniProtKB-KW"/>
</dbReference>
<dbReference type="HAMAP" id="MF_00395">
    <property type="entry name" value="Cytb6_f_PetN"/>
    <property type="match status" value="1"/>
</dbReference>
<dbReference type="InterPro" id="IPR036143">
    <property type="entry name" value="Cytochr_b6-f_cplx_su8_sf"/>
</dbReference>
<dbReference type="InterPro" id="IPR005497">
    <property type="entry name" value="Cytochrome_b6-f_cplx_su8"/>
</dbReference>
<dbReference type="Pfam" id="PF03742">
    <property type="entry name" value="PetN"/>
    <property type="match status" value="1"/>
</dbReference>
<dbReference type="SUPFAM" id="SSF103451">
    <property type="entry name" value="PetN subunit of the cytochrome b6f complex"/>
    <property type="match status" value="1"/>
</dbReference>
<proteinExistence type="inferred from homology"/>
<accession>A6MMT7</accession>
<sequence>MIHMDIVSLAWAALMVVFTFSLSLVVWGRSGL</sequence>
<geneLocation type="chloroplast"/>
<reference key="1">
    <citation type="journal article" date="2007" name="Mol. Phylogenet. Evol.">
        <title>Phylogenetic and evolutionary implications of complete chloroplast genome sequences of four early-diverging angiosperms: Buxus (Buxaceae), Chloranthus (Chloranthaceae), Dioscorea (Dioscoreaceae), and Illicium (Schisandraceae).</title>
        <authorList>
            <person name="Hansen D.R."/>
            <person name="Dastidar S.G."/>
            <person name="Cai Z."/>
            <person name="Penaflor C."/>
            <person name="Kuehl J.V."/>
            <person name="Boore J.L."/>
            <person name="Jansen R.K."/>
        </authorList>
    </citation>
    <scope>NUCLEOTIDE SEQUENCE [LARGE SCALE GENOMIC DNA]</scope>
</reference>
<gene>
    <name evidence="1" type="primary">petN</name>
</gene>
<organism>
    <name type="scientific">Illicium oligandrum</name>
    <name type="common">Star anise</name>
    <dbReference type="NCBI Taxonomy" id="145286"/>
    <lineage>
        <taxon>Eukaryota</taxon>
        <taxon>Viridiplantae</taxon>
        <taxon>Streptophyta</taxon>
        <taxon>Embryophyta</taxon>
        <taxon>Tracheophyta</taxon>
        <taxon>Spermatophyta</taxon>
        <taxon>Magnoliopsida</taxon>
        <taxon>Austrobaileyales</taxon>
        <taxon>Schisandraceae</taxon>
        <taxon>Illicium</taxon>
    </lineage>
</organism>
<feature type="chain" id="PRO_0000355443" description="Cytochrome b6-f complex subunit 8">
    <location>
        <begin position="1"/>
        <end position="32"/>
    </location>
</feature>
<feature type="transmembrane region" description="Helical" evidence="1">
    <location>
        <begin position="6"/>
        <end position="26"/>
    </location>
</feature>
<name>PETN_ILLOL</name>
<comment type="function">
    <text evidence="1">Component of the cytochrome b6-f complex, which mediates electron transfer between photosystem II (PSII) and photosystem I (PSI), cyclic electron flow around PSI, and state transitions.</text>
</comment>
<comment type="subunit">
    <text evidence="1">The 4 large subunits of the cytochrome b6-f complex are cytochrome b6, subunit IV (17 kDa polypeptide, PetD), cytochrome f and the Rieske protein, while the 4 small subunits are PetG, PetL, PetM and PetN. The complex functions as a dimer.</text>
</comment>
<comment type="subcellular location">
    <subcellularLocation>
        <location evidence="1">Plastid</location>
        <location evidence="1">Chloroplast thylakoid membrane</location>
        <topology evidence="1">Single-pass membrane protein</topology>
    </subcellularLocation>
</comment>
<comment type="similarity">
    <text evidence="1">Belongs to the PetN family.</text>
</comment>
<evidence type="ECO:0000255" key="1">
    <source>
        <dbReference type="HAMAP-Rule" id="MF_00395"/>
    </source>
</evidence>
<protein>
    <recommendedName>
        <fullName evidence="1">Cytochrome b6-f complex subunit 8</fullName>
    </recommendedName>
    <alternativeName>
        <fullName evidence="1">Cytochrome b6-f complex subunit PetN</fullName>
    </alternativeName>
    <alternativeName>
        <fullName evidence="1">Cytochrome b6-f complex subunit VIII</fullName>
    </alternativeName>
</protein>
<keyword id="KW-0150">Chloroplast</keyword>
<keyword id="KW-0249">Electron transport</keyword>
<keyword id="KW-0472">Membrane</keyword>
<keyword id="KW-0602">Photosynthesis</keyword>
<keyword id="KW-0934">Plastid</keyword>
<keyword id="KW-0793">Thylakoid</keyword>
<keyword id="KW-0812">Transmembrane</keyword>
<keyword id="KW-1133">Transmembrane helix</keyword>
<keyword id="KW-0813">Transport</keyword>